<accession>P9WK88</accession>
<accession>L0T740</accession>
<accession>O06598</accession>
<accession>Q8VK00</accession>
<protein>
    <recommendedName>
        <fullName>Probable inactive lipase MT1628</fullName>
    </recommendedName>
</protein>
<comment type="similarity">
    <text evidence="1">Belongs to the AB hydrolase superfamily. Lipase family.</text>
</comment>
<comment type="caution">
    <text evidence="1">Although related to the lipase family, lacks the conserved His active site at position 344 which is replaced by a Gln residue, suggesting it is inactive.</text>
</comment>
<comment type="sequence caution" evidence="1">
    <conflict type="erroneous initiation">
        <sequence resource="EMBL-CDS" id="AAK45896"/>
    </conflict>
</comment>
<proteinExistence type="inferred from homology"/>
<organism>
    <name type="scientific">Mycobacterium tuberculosis (strain CDC 1551 / Oshkosh)</name>
    <dbReference type="NCBI Taxonomy" id="83331"/>
    <lineage>
        <taxon>Bacteria</taxon>
        <taxon>Bacillati</taxon>
        <taxon>Actinomycetota</taxon>
        <taxon>Actinomycetes</taxon>
        <taxon>Mycobacteriales</taxon>
        <taxon>Mycobacteriaceae</taxon>
        <taxon>Mycobacterium</taxon>
        <taxon>Mycobacterium tuberculosis complex</taxon>
    </lineage>
</organism>
<feature type="chain" id="PRO_0000427696" description="Probable inactive lipase MT1628">
    <location>
        <begin position="1"/>
        <end position="446"/>
    </location>
</feature>
<gene>
    <name type="ordered locus">MT1628</name>
</gene>
<keyword id="KW-1185">Reference proteome</keyword>
<reference key="1">
    <citation type="journal article" date="2002" name="J. Bacteriol.">
        <title>Whole-genome comparison of Mycobacterium tuberculosis clinical and laboratory strains.</title>
        <authorList>
            <person name="Fleischmann R.D."/>
            <person name="Alland D."/>
            <person name="Eisen J.A."/>
            <person name="Carpenter L."/>
            <person name="White O."/>
            <person name="Peterson J.D."/>
            <person name="DeBoy R.T."/>
            <person name="Dodson R.J."/>
            <person name="Gwinn M.L."/>
            <person name="Haft D.H."/>
            <person name="Hickey E.K."/>
            <person name="Kolonay J.F."/>
            <person name="Nelson W.C."/>
            <person name="Umayam L.A."/>
            <person name="Ermolaeva M.D."/>
            <person name="Salzberg S.L."/>
            <person name="Delcher A."/>
            <person name="Utterback T.R."/>
            <person name="Weidman J.F."/>
            <person name="Khouri H.M."/>
            <person name="Gill J."/>
            <person name="Mikula A."/>
            <person name="Bishai W."/>
            <person name="Jacobs W.R. Jr."/>
            <person name="Venter J.C."/>
            <person name="Fraser C.M."/>
        </authorList>
    </citation>
    <scope>NUCLEOTIDE SEQUENCE [LARGE SCALE GENOMIC DNA]</scope>
    <source>
        <strain>CDC 1551 / Oshkosh</strain>
    </source>
</reference>
<dbReference type="EMBL" id="AE000516">
    <property type="protein sequence ID" value="AAK45896.1"/>
    <property type="status" value="ALT_INIT"/>
    <property type="molecule type" value="Genomic_DNA"/>
</dbReference>
<dbReference type="PIR" id="B70543">
    <property type="entry name" value="B70543"/>
</dbReference>
<dbReference type="RefSeq" id="WP_003407926.1">
    <property type="nucleotide sequence ID" value="NZ_KK341227.1"/>
</dbReference>
<dbReference type="SMR" id="P9WK88"/>
<dbReference type="ESTHER" id="myctu-MT1628">
    <property type="family name" value="Fungal-Bact_LIP"/>
</dbReference>
<dbReference type="KEGG" id="mtc:MT1628"/>
<dbReference type="PATRIC" id="fig|83331.31.peg.1750"/>
<dbReference type="HOGENOM" id="CLU_029538_5_0_11"/>
<dbReference type="Proteomes" id="UP000001020">
    <property type="component" value="Chromosome"/>
</dbReference>
<dbReference type="GO" id="GO:0004806">
    <property type="term" value="F:triacylglycerol lipase activity"/>
    <property type="evidence" value="ECO:0007669"/>
    <property type="project" value="InterPro"/>
</dbReference>
<dbReference type="GO" id="GO:0016042">
    <property type="term" value="P:lipid catabolic process"/>
    <property type="evidence" value="ECO:0007669"/>
    <property type="project" value="InterPro"/>
</dbReference>
<dbReference type="Gene3D" id="1.10.260.130">
    <property type="match status" value="1"/>
</dbReference>
<dbReference type="Gene3D" id="3.40.50.1820">
    <property type="entry name" value="alpha/beta hydrolase"/>
    <property type="match status" value="1"/>
</dbReference>
<dbReference type="InterPro" id="IPR029058">
    <property type="entry name" value="AB_hydrolase_fold"/>
</dbReference>
<dbReference type="InterPro" id="IPR005152">
    <property type="entry name" value="Lipase_secreted"/>
</dbReference>
<dbReference type="PANTHER" id="PTHR34853">
    <property type="match status" value="1"/>
</dbReference>
<dbReference type="PANTHER" id="PTHR34853:SF1">
    <property type="entry name" value="LIPASE 5"/>
    <property type="match status" value="1"/>
</dbReference>
<dbReference type="Pfam" id="PF03583">
    <property type="entry name" value="LIP"/>
    <property type="match status" value="1"/>
</dbReference>
<dbReference type="PIRSF" id="PIRSF029171">
    <property type="entry name" value="Esterase_LipA"/>
    <property type="match status" value="1"/>
</dbReference>
<dbReference type="SUPFAM" id="SSF53474">
    <property type="entry name" value="alpha/beta-Hydrolases"/>
    <property type="match status" value="1"/>
</dbReference>
<evidence type="ECO:0000305" key="1"/>
<sequence length="446" mass="48029">MVEPGNLAGATGAEWIGRPPHEELQRKVRPLLPSDDPFYFPPAGYQHAVPGTVLRSRDVELAFMGLIPQPVTATQLLYRTTNMYGNPEATVTTVIVPAELAPGQTCPLLSYQCAIDAMSSRCFPSYALRRRAKALGSLTQMELLMISAALAEGWAVSVPDHEGPKGLWGSPYEPGYRVLDGIRAALNSERVGLSPATPIGLWGYSGGGLASAWAAEACGEYAPDLDIVGAVLGSPVGDLGHTFRRLNGTLLAGLPALVVAALQHSYPGLARVIKEHANDEGRQLLEQLTEMTTVDAVIRMAGRDMGDFLDEPLEDILSTPEVSHVFGDTKLGSAVPTPPVLIVQAVHDYLIDVSDIDALADSYTAGGANVTYHRDLFSEHVSLHPLSAPMTLRWLTDRFAGKPLTDHRVRTTWPTIFNPMTYAGMARLAVIAAKVITGRKLSRRPL</sequence>
<name>Y1592_MYCTO</name>